<dbReference type="EMBL" id="CP000050">
    <property type="protein sequence ID" value="AAY50387.1"/>
    <property type="molecule type" value="Genomic_DNA"/>
</dbReference>
<dbReference type="RefSeq" id="WP_011036120.1">
    <property type="nucleotide sequence ID" value="NZ_CP155948.1"/>
</dbReference>
<dbReference type="SMR" id="Q4URD6"/>
<dbReference type="KEGG" id="xcb:XC_3343"/>
<dbReference type="HOGENOM" id="CLU_002794_4_1_6"/>
<dbReference type="Proteomes" id="UP000000420">
    <property type="component" value="Chromosome"/>
</dbReference>
<dbReference type="GO" id="GO:0005737">
    <property type="term" value="C:cytoplasm"/>
    <property type="evidence" value="ECO:0007669"/>
    <property type="project" value="UniProtKB-SubCell"/>
</dbReference>
<dbReference type="GO" id="GO:0005525">
    <property type="term" value="F:GTP binding"/>
    <property type="evidence" value="ECO:0007669"/>
    <property type="project" value="UniProtKB-UniRule"/>
</dbReference>
<dbReference type="GO" id="GO:0003924">
    <property type="term" value="F:GTPase activity"/>
    <property type="evidence" value="ECO:0007669"/>
    <property type="project" value="InterPro"/>
</dbReference>
<dbReference type="GO" id="GO:0097216">
    <property type="term" value="F:guanosine tetraphosphate binding"/>
    <property type="evidence" value="ECO:0007669"/>
    <property type="project" value="UniProtKB-ARBA"/>
</dbReference>
<dbReference type="GO" id="GO:0003746">
    <property type="term" value="F:translation elongation factor activity"/>
    <property type="evidence" value="ECO:0007669"/>
    <property type="project" value="UniProtKB-UniRule"/>
</dbReference>
<dbReference type="GO" id="GO:0032790">
    <property type="term" value="P:ribosome disassembly"/>
    <property type="evidence" value="ECO:0007669"/>
    <property type="project" value="TreeGrafter"/>
</dbReference>
<dbReference type="CDD" id="cd01886">
    <property type="entry name" value="EF-G"/>
    <property type="match status" value="1"/>
</dbReference>
<dbReference type="CDD" id="cd16262">
    <property type="entry name" value="EFG_III"/>
    <property type="match status" value="1"/>
</dbReference>
<dbReference type="CDD" id="cd01434">
    <property type="entry name" value="EFG_mtEFG1_IV"/>
    <property type="match status" value="1"/>
</dbReference>
<dbReference type="CDD" id="cd03713">
    <property type="entry name" value="EFG_mtEFG_C"/>
    <property type="match status" value="1"/>
</dbReference>
<dbReference type="CDD" id="cd04088">
    <property type="entry name" value="EFG_mtEFG_II"/>
    <property type="match status" value="1"/>
</dbReference>
<dbReference type="FunFam" id="2.40.30.10:FF:000006">
    <property type="entry name" value="Elongation factor G"/>
    <property type="match status" value="1"/>
</dbReference>
<dbReference type="FunFam" id="3.30.230.10:FF:000003">
    <property type="entry name" value="Elongation factor G"/>
    <property type="match status" value="1"/>
</dbReference>
<dbReference type="FunFam" id="3.30.70.240:FF:000001">
    <property type="entry name" value="Elongation factor G"/>
    <property type="match status" value="1"/>
</dbReference>
<dbReference type="FunFam" id="3.30.70.870:FF:000001">
    <property type="entry name" value="Elongation factor G"/>
    <property type="match status" value="1"/>
</dbReference>
<dbReference type="FunFam" id="3.40.50.300:FF:000029">
    <property type="entry name" value="Elongation factor G"/>
    <property type="match status" value="1"/>
</dbReference>
<dbReference type="Gene3D" id="3.30.230.10">
    <property type="match status" value="1"/>
</dbReference>
<dbReference type="Gene3D" id="3.30.70.240">
    <property type="match status" value="1"/>
</dbReference>
<dbReference type="Gene3D" id="3.30.70.870">
    <property type="entry name" value="Elongation Factor G (Translational Gtpase), domain 3"/>
    <property type="match status" value="1"/>
</dbReference>
<dbReference type="Gene3D" id="3.40.50.300">
    <property type="entry name" value="P-loop containing nucleotide triphosphate hydrolases"/>
    <property type="match status" value="1"/>
</dbReference>
<dbReference type="Gene3D" id="2.40.30.10">
    <property type="entry name" value="Translation factors"/>
    <property type="match status" value="1"/>
</dbReference>
<dbReference type="HAMAP" id="MF_00054_B">
    <property type="entry name" value="EF_G_EF_2_B"/>
    <property type="match status" value="1"/>
</dbReference>
<dbReference type="InterPro" id="IPR041095">
    <property type="entry name" value="EFG_II"/>
</dbReference>
<dbReference type="InterPro" id="IPR009022">
    <property type="entry name" value="EFG_III"/>
</dbReference>
<dbReference type="InterPro" id="IPR035647">
    <property type="entry name" value="EFG_III/V"/>
</dbReference>
<dbReference type="InterPro" id="IPR047872">
    <property type="entry name" value="EFG_IV"/>
</dbReference>
<dbReference type="InterPro" id="IPR035649">
    <property type="entry name" value="EFG_V"/>
</dbReference>
<dbReference type="InterPro" id="IPR000640">
    <property type="entry name" value="EFG_V-like"/>
</dbReference>
<dbReference type="InterPro" id="IPR004161">
    <property type="entry name" value="EFTu-like_2"/>
</dbReference>
<dbReference type="InterPro" id="IPR031157">
    <property type="entry name" value="G_TR_CS"/>
</dbReference>
<dbReference type="InterPro" id="IPR027417">
    <property type="entry name" value="P-loop_NTPase"/>
</dbReference>
<dbReference type="InterPro" id="IPR020568">
    <property type="entry name" value="Ribosomal_Su5_D2-typ_SF"/>
</dbReference>
<dbReference type="InterPro" id="IPR014721">
    <property type="entry name" value="Ribsml_uS5_D2-typ_fold_subgr"/>
</dbReference>
<dbReference type="InterPro" id="IPR005225">
    <property type="entry name" value="Small_GTP-bd"/>
</dbReference>
<dbReference type="InterPro" id="IPR000795">
    <property type="entry name" value="T_Tr_GTP-bd_dom"/>
</dbReference>
<dbReference type="InterPro" id="IPR009000">
    <property type="entry name" value="Transl_B-barrel_sf"/>
</dbReference>
<dbReference type="InterPro" id="IPR004540">
    <property type="entry name" value="Transl_elong_EFG/EF2"/>
</dbReference>
<dbReference type="InterPro" id="IPR005517">
    <property type="entry name" value="Transl_elong_EFG/EF2_IV"/>
</dbReference>
<dbReference type="NCBIfam" id="TIGR00484">
    <property type="entry name" value="EF-G"/>
    <property type="match status" value="1"/>
</dbReference>
<dbReference type="NCBIfam" id="NF009381">
    <property type="entry name" value="PRK12740.1-5"/>
    <property type="match status" value="1"/>
</dbReference>
<dbReference type="NCBIfam" id="TIGR00231">
    <property type="entry name" value="small_GTP"/>
    <property type="match status" value="1"/>
</dbReference>
<dbReference type="PANTHER" id="PTHR43261:SF1">
    <property type="entry name" value="RIBOSOME-RELEASING FACTOR 2, MITOCHONDRIAL"/>
    <property type="match status" value="1"/>
</dbReference>
<dbReference type="PANTHER" id="PTHR43261">
    <property type="entry name" value="TRANSLATION ELONGATION FACTOR G-RELATED"/>
    <property type="match status" value="1"/>
</dbReference>
<dbReference type="Pfam" id="PF00679">
    <property type="entry name" value="EFG_C"/>
    <property type="match status" value="1"/>
</dbReference>
<dbReference type="Pfam" id="PF14492">
    <property type="entry name" value="EFG_III"/>
    <property type="match status" value="1"/>
</dbReference>
<dbReference type="Pfam" id="PF03764">
    <property type="entry name" value="EFG_IV"/>
    <property type="match status" value="1"/>
</dbReference>
<dbReference type="Pfam" id="PF00009">
    <property type="entry name" value="GTP_EFTU"/>
    <property type="match status" value="1"/>
</dbReference>
<dbReference type="Pfam" id="PF03144">
    <property type="entry name" value="GTP_EFTU_D2"/>
    <property type="match status" value="1"/>
</dbReference>
<dbReference type="PRINTS" id="PR00315">
    <property type="entry name" value="ELONGATNFCT"/>
</dbReference>
<dbReference type="SMART" id="SM00838">
    <property type="entry name" value="EFG_C"/>
    <property type="match status" value="1"/>
</dbReference>
<dbReference type="SMART" id="SM00889">
    <property type="entry name" value="EFG_IV"/>
    <property type="match status" value="1"/>
</dbReference>
<dbReference type="SUPFAM" id="SSF54980">
    <property type="entry name" value="EF-G C-terminal domain-like"/>
    <property type="match status" value="2"/>
</dbReference>
<dbReference type="SUPFAM" id="SSF52540">
    <property type="entry name" value="P-loop containing nucleoside triphosphate hydrolases"/>
    <property type="match status" value="1"/>
</dbReference>
<dbReference type="SUPFAM" id="SSF54211">
    <property type="entry name" value="Ribosomal protein S5 domain 2-like"/>
    <property type="match status" value="1"/>
</dbReference>
<dbReference type="SUPFAM" id="SSF50447">
    <property type="entry name" value="Translation proteins"/>
    <property type="match status" value="1"/>
</dbReference>
<dbReference type="PROSITE" id="PS00301">
    <property type="entry name" value="G_TR_1"/>
    <property type="match status" value="1"/>
</dbReference>
<dbReference type="PROSITE" id="PS51722">
    <property type="entry name" value="G_TR_2"/>
    <property type="match status" value="1"/>
</dbReference>
<feature type="chain" id="PRO_0000225250" description="Elongation factor G">
    <location>
        <begin position="1"/>
        <end position="705"/>
    </location>
</feature>
<feature type="domain" description="tr-type G">
    <location>
        <begin position="8"/>
        <end position="290"/>
    </location>
</feature>
<feature type="region of interest" description="Disordered" evidence="2">
    <location>
        <begin position="290"/>
        <end position="309"/>
    </location>
</feature>
<feature type="binding site" evidence="1">
    <location>
        <begin position="17"/>
        <end position="24"/>
    </location>
    <ligand>
        <name>GTP</name>
        <dbReference type="ChEBI" id="CHEBI:37565"/>
    </ligand>
</feature>
<feature type="binding site" evidence="1">
    <location>
        <begin position="88"/>
        <end position="92"/>
    </location>
    <ligand>
        <name>GTP</name>
        <dbReference type="ChEBI" id="CHEBI:37565"/>
    </ligand>
</feature>
<feature type="binding site" evidence="1">
    <location>
        <begin position="142"/>
        <end position="145"/>
    </location>
    <ligand>
        <name>GTP</name>
        <dbReference type="ChEBI" id="CHEBI:37565"/>
    </ligand>
</feature>
<comment type="function">
    <text evidence="1">Catalyzes the GTP-dependent ribosomal translocation step during translation elongation. During this step, the ribosome changes from the pre-translocational (PRE) to the post-translocational (POST) state as the newly formed A-site-bound peptidyl-tRNA and P-site-bound deacylated tRNA move to the P and E sites, respectively. Catalyzes the coordinated movement of the two tRNA molecules, the mRNA and conformational changes in the ribosome.</text>
</comment>
<comment type="subcellular location">
    <subcellularLocation>
        <location evidence="1">Cytoplasm</location>
    </subcellularLocation>
</comment>
<comment type="similarity">
    <text evidence="1">Belongs to the TRAFAC class translation factor GTPase superfamily. Classic translation factor GTPase family. EF-G/EF-2 subfamily.</text>
</comment>
<evidence type="ECO:0000255" key="1">
    <source>
        <dbReference type="HAMAP-Rule" id="MF_00054"/>
    </source>
</evidence>
<evidence type="ECO:0000256" key="2">
    <source>
        <dbReference type="SAM" id="MobiDB-lite"/>
    </source>
</evidence>
<name>EFG_XANC8</name>
<accession>Q4URD6</accession>
<organism>
    <name type="scientific">Xanthomonas campestris pv. campestris (strain 8004)</name>
    <dbReference type="NCBI Taxonomy" id="314565"/>
    <lineage>
        <taxon>Bacteria</taxon>
        <taxon>Pseudomonadati</taxon>
        <taxon>Pseudomonadota</taxon>
        <taxon>Gammaproteobacteria</taxon>
        <taxon>Lysobacterales</taxon>
        <taxon>Lysobacteraceae</taxon>
        <taxon>Xanthomonas</taxon>
    </lineage>
</organism>
<keyword id="KW-0963">Cytoplasm</keyword>
<keyword id="KW-0251">Elongation factor</keyword>
<keyword id="KW-0342">GTP-binding</keyword>
<keyword id="KW-0547">Nucleotide-binding</keyword>
<keyword id="KW-0648">Protein biosynthesis</keyword>
<reference key="1">
    <citation type="journal article" date="2005" name="Genome Res.">
        <title>Comparative and functional genomic analyses of the pathogenicity of phytopathogen Xanthomonas campestris pv. campestris.</title>
        <authorList>
            <person name="Qian W."/>
            <person name="Jia Y."/>
            <person name="Ren S.-X."/>
            <person name="He Y.-Q."/>
            <person name="Feng J.-X."/>
            <person name="Lu L.-F."/>
            <person name="Sun Q."/>
            <person name="Ying G."/>
            <person name="Tang D.-J."/>
            <person name="Tang H."/>
            <person name="Wu W."/>
            <person name="Hao P."/>
            <person name="Wang L."/>
            <person name="Jiang B.-L."/>
            <person name="Zeng S."/>
            <person name="Gu W.-Y."/>
            <person name="Lu G."/>
            <person name="Rong L."/>
            <person name="Tian Y."/>
            <person name="Yao Z."/>
            <person name="Fu G."/>
            <person name="Chen B."/>
            <person name="Fang R."/>
            <person name="Qiang B."/>
            <person name="Chen Z."/>
            <person name="Zhao G.-P."/>
            <person name="Tang J.-L."/>
            <person name="He C."/>
        </authorList>
    </citation>
    <scope>NUCLEOTIDE SEQUENCE [LARGE SCALE GENOMIC DNA]</scope>
    <source>
        <strain>8004</strain>
    </source>
</reference>
<gene>
    <name evidence="1" type="primary">fusA</name>
    <name type="ordered locus">XC_3343</name>
</gene>
<sequence>MARTTPIERYRNFGIMAHIDAGKTTTSERILFYTGVSHKIGEVHDGAAVMDWMEQEQERGITITSAATTAFWTGMDKSMPQHRFNIIDTPGHVDFTIEVERSLRVLDGAVFVLCAVGGVQPQSETVWRQANKYSVPRMAFVNKMDRTGANFDKVVEQLKARLGAYAVPMQVPIGAEDGFEGVVDLLKMKAIHWDTASQGTTFEYRDIPADLVDVATEARSFMVEAAAEASEALMDKYLNDGDLSEDEILSGLRERTLKVEIVPVFCGSAFKNKGVQAMLDGVVHLLPSPADRPPVQGIDENEKEDTRDATDTAPFSALAFKIMTDPFVGSLTFFRVYSGTLNSGDQVYNPVKSKKERVGRILQMHSNNREEIKEVRAGDIAAAVGLKDVTTGDTLCAQDKIITLERMVFPEPVISMAVEPKTKSDQEKMGMALGRLAQEDPSFRVKTDEESGQTIISGMGELHLDIIVDRMRREFNVEANVGKPQVAYRETIRKSDVKSDYKHAKQSGGKGQYGHVVIELSPMTEEDRKNDSVKDDFLFINDITGGIIPKEFIPSVEKGLRETITSGPIAGFPVVGVKVKLVFGSYHDVDSSEMAFKLAASMAFKQGFAKASPVLLEPIMKVEIVSPEDYLGDVMGDVSRRRGVLQGQDDSPSGKIINAMIPLGEMFGYATSLRSMSQGRATFSMEFDHYEEAPANIADAVTKKG</sequence>
<protein>
    <recommendedName>
        <fullName evidence="1">Elongation factor G</fullName>
        <shortName evidence="1">EF-G</shortName>
    </recommendedName>
</protein>
<proteinExistence type="inferred from homology"/>